<proteinExistence type="inferred from homology"/>
<keyword id="KW-1185">Reference proteome</keyword>
<keyword id="KW-0687">Ribonucleoprotein</keyword>
<keyword id="KW-0689">Ribosomal protein</keyword>
<keyword id="KW-0694">RNA-binding</keyword>
<keyword id="KW-0699">rRNA-binding</keyword>
<accession>Q82DN0</accession>
<reference key="1">
    <citation type="journal article" date="2001" name="Proc. Natl. Acad. Sci. U.S.A.">
        <title>Genome sequence of an industrial microorganism Streptomyces avermitilis: deducing the ability of producing secondary metabolites.</title>
        <authorList>
            <person name="Omura S."/>
            <person name="Ikeda H."/>
            <person name="Ishikawa J."/>
            <person name="Hanamoto A."/>
            <person name="Takahashi C."/>
            <person name="Shinose M."/>
            <person name="Takahashi Y."/>
            <person name="Horikawa H."/>
            <person name="Nakazawa H."/>
            <person name="Osonoe T."/>
            <person name="Kikuchi H."/>
            <person name="Shiba T."/>
            <person name="Sakaki Y."/>
            <person name="Hattori M."/>
        </authorList>
    </citation>
    <scope>NUCLEOTIDE SEQUENCE [LARGE SCALE GENOMIC DNA]</scope>
    <source>
        <strain>ATCC 31267 / DSM 46492 / JCM 5070 / NBRC 14893 / NCIMB 12804 / NRRL 8165 / MA-4680</strain>
    </source>
</reference>
<reference key="2">
    <citation type="journal article" date="2003" name="Nat. Biotechnol.">
        <title>Complete genome sequence and comparative analysis of the industrial microorganism Streptomyces avermitilis.</title>
        <authorList>
            <person name="Ikeda H."/>
            <person name="Ishikawa J."/>
            <person name="Hanamoto A."/>
            <person name="Shinose M."/>
            <person name="Kikuchi H."/>
            <person name="Shiba T."/>
            <person name="Sakaki Y."/>
            <person name="Hattori M."/>
            <person name="Omura S."/>
        </authorList>
    </citation>
    <scope>NUCLEOTIDE SEQUENCE [LARGE SCALE GENOMIC DNA]</scope>
    <source>
        <strain>ATCC 31267 / DSM 46492 / JCM 5070 / NBRC 14893 / NCIMB 12804 / NRRL 8165 / MA-4680</strain>
    </source>
</reference>
<sequence length="127" mass="13505">MAYGVKIAKGDAYKRAAIKRRHIRIRKHISGTAERPRLVVTRSNRHIVAQVIDDVKGHTLASASTLDTTIRGGESDKSAQAKSVGALVAERAKAAGVEAVVFDRGGNQYAGRIAALADAAREAGLKF</sequence>
<gene>
    <name evidence="1" type="primary">rplR</name>
    <name type="ordered locus">SAV_4942</name>
</gene>
<feature type="chain" id="PRO_0000131354" description="Large ribosomal subunit protein uL18">
    <location>
        <begin position="1"/>
        <end position="127"/>
    </location>
</feature>
<protein>
    <recommendedName>
        <fullName evidence="1">Large ribosomal subunit protein uL18</fullName>
    </recommendedName>
    <alternativeName>
        <fullName evidence="2">50S ribosomal protein L18</fullName>
    </alternativeName>
</protein>
<comment type="function">
    <text evidence="1">This is one of the proteins that bind and probably mediate the attachment of the 5S RNA into the large ribosomal subunit, where it forms part of the central protuberance.</text>
</comment>
<comment type="subunit">
    <text evidence="1">Part of the 50S ribosomal subunit; part of the 5S rRNA/L5/L18/L25 subcomplex. Contacts the 5S and 23S rRNAs.</text>
</comment>
<comment type="similarity">
    <text evidence="1">Belongs to the universal ribosomal protein uL18 family.</text>
</comment>
<name>RL18_STRAW</name>
<organism>
    <name type="scientific">Streptomyces avermitilis (strain ATCC 31267 / DSM 46492 / JCM 5070 / NBRC 14893 / NCIMB 12804 / NRRL 8165 / MA-4680)</name>
    <dbReference type="NCBI Taxonomy" id="227882"/>
    <lineage>
        <taxon>Bacteria</taxon>
        <taxon>Bacillati</taxon>
        <taxon>Actinomycetota</taxon>
        <taxon>Actinomycetes</taxon>
        <taxon>Kitasatosporales</taxon>
        <taxon>Streptomycetaceae</taxon>
        <taxon>Streptomyces</taxon>
    </lineage>
</organism>
<dbReference type="EMBL" id="BA000030">
    <property type="protein sequence ID" value="BAC72654.1"/>
    <property type="molecule type" value="Genomic_DNA"/>
</dbReference>
<dbReference type="RefSeq" id="WP_010986354.1">
    <property type="nucleotide sequence ID" value="NZ_JZJK01000077.1"/>
</dbReference>
<dbReference type="SMR" id="Q82DN0"/>
<dbReference type="GeneID" id="41542025"/>
<dbReference type="KEGG" id="sma:SAVERM_4942"/>
<dbReference type="eggNOG" id="COG0256">
    <property type="taxonomic scope" value="Bacteria"/>
</dbReference>
<dbReference type="HOGENOM" id="CLU_098841_0_1_11"/>
<dbReference type="OrthoDB" id="9810939at2"/>
<dbReference type="Proteomes" id="UP000000428">
    <property type="component" value="Chromosome"/>
</dbReference>
<dbReference type="GO" id="GO:0022625">
    <property type="term" value="C:cytosolic large ribosomal subunit"/>
    <property type="evidence" value="ECO:0007669"/>
    <property type="project" value="TreeGrafter"/>
</dbReference>
<dbReference type="GO" id="GO:0008097">
    <property type="term" value="F:5S rRNA binding"/>
    <property type="evidence" value="ECO:0007669"/>
    <property type="project" value="TreeGrafter"/>
</dbReference>
<dbReference type="GO" id="GO:0003735">
    <property type="term" value="F:structural constituent of ribosome"/>
    <property type="evidence" value="ECO:0007669"/>
    <property type="project" value="InterPro"/>
</dbReference>
<dbReference type="GO" id="GO:0006412">
    <property type="term" value="P:translation"/>
    <property type="evidence" value="ECO:0007669"/>
    <property type="project" value="UniProtKB-UniRule"/>
</dbReference>
<dbReference type="CDD" id="cd00432">
    <property type="entry name" value="Ribosomal_L18_L5e"/>
    <property type="match status" value="1"/>
</dbReference>
<dbReference type="FunFam" id="3.30.420.100:FF:000001">
    <property type="entry name" value="50S ribosomal protein L18"/>
    <property type="match status" value="1"/>
</dbReference>
<dbReference type="Gene3D" id="3.30.420.100">
    <property type="match status" value="1"/>
</dbReference>
<dbReference type="HAMAP" id="MF_01337_B">
    <property type="entry name" value="Ribosomal_uL18_B"/>
    <property type="match status" value="1"/>
</dbReference>
<dbReference type="InterPro" id="IPR004389">
    <property type="entry name" value="Ribosomal_uL18_bac-type"/>
</dbReference>
<dbReference type="InterPro" id="IPR005484">
    <property type="entry name" value="Ribosomal_uL18_bac/euk"/>
</dbReference>
<dbReference type="NCBIfam" id="TIGR00060">
    <property type="entry name" value="L18_bact"/>
    <property type="match status" value="1"/>
</dbReference>
<dbReference type="PANTHER" id="PTHR12899">
    <property type="entry name" value="39S RIBOSOMAL PROTEIN L18, MITOCHONDRIAL"/>
    <property type="match status" value="1"/>
</dbReference>
<dbReference type="PANTHER" id="PTHR12899:SF3">
    <property type="entry name" value="LARGE RIBOSOMAL SUBUNIT PROTEIN UL18M"/>
    <property type="match status" value="1"/>
</dbReference>
<dbReference type="Pfam" id="PF00861">
    <property type="entry name" value="Ribosomal_L18p"/>
    <property type="match status" value="1"/>
</dbReference>
<dbReference type="SUPFAM" id="SSF53137">
    <property type="entry name" value="Translational machinery components"/>
    <property type="match status" value="1"/>
</dbReference>
<evidence type="ECO:0000255" key="1">
    <source>
        <dbReference type="HAMAP-Rule" id="MF_01337"/>
    </source>
</evidence>
<evidence type="ECO:0000305" key="2"/>